<comment type="function">
    <text evidence="2">Based on its fold and a conserved His residue, has been predicted to be a nuclease.</text>
</comment>
<comment type="miscellaneous">
    <text>Encoded by the cryptic lambdoid prophage DLP12.</text>
</comment>
<comment type="similarity">
    <text evidence="1">Belongs to the YbcO family.</text>
</comment>
<keyword id="KW-0002">3D-structure</keyword>
<keyword id="KW-0378">Hydrolase</keyword>
<keyword id="KW-0479">Metal-binding</keyword>
<keyword id="KW-0540">Nuclease</keyword>
<keyword id="KW-1185">Reference proteome</keyword>
<keyword id="KW-0862">Zinc</keyword>
<accession>P68661</accession>
<accession>Q2MBN2</accession>
<accession>Q37872</accession>
<accession>Q47271</accession>
<proteinExistence type="evidence at protein level"/>
<name>YBCO_ECOLI</name>
<dbReference type="EC" id="3.1.-.-"/>
<dbReference type="EMBL" id="X92587">
    <property type="protein sequence ID" value="CAA63320.1"/>
    <property type="molecule type" value="Genomic_DNA"/>
</dbReference>
<dbReference type="EMBL" id="U82598">
    <property type="protein sequence ID" value="AAB40745.1"/>
    <property type="molecule type" value="Genomic_DNA"/>
</dbReference>
<dbReference type="EMBL" id="U00096">
    <property type="protein sequence ID" value="AAC73650.1"/>
    <property type="molecule type" value="Genomic_DNA"/>
</dbReference>
<dbReference type="EMBL" id="AP009048">
    <property type="protein sequence ID" value="BAE76324.1"/>
    <property type="molecule type" value="Genomic_DNA"/>
</dbReference>
<dbReference type="PIR" id="C64787">
    <property type="entry name" value="C64787"/>
</dbReference>
<dbReference type="RefSeq" id="NP_415081.1">
    <property type="nucleotide sequence ID" value="NC_000913.3"/>
</dbReference>
<dbReference type="RefSeq" id="WP_000774486.1">
    <property type="nucleotide sequence ID" value="NZ_LN832404.1"/>
</dbReference>
<dbReference type="PDB" id="3G27">
    <property type="method" value="X-ray"/>
    <property type="resolution" value="2.10 A"/>
    <property type="chains" value="A=1-96"/>
</dbReference>
<dbReference type="PDBsum" id="3G27"/>
<dbReference type="SMR" id="P68661"/>
<dbReference type="BioGRID" id="4261524">
    <property type="interactions" value="161"/>
</dbReference>
<dbReference type="BioGRID" id="849535">
    <property type="interactions" value="1"/>
</dbReference>
<dbReference type="FunCoup" id="P68661">
    <property type="interactions" value="175"/>
</dbReference>
<dbReference type="IntAct" id="P68661">
    <property type="interactions" value="1"/>
</dbReference>
<dbReference type="STRING" id="511145.b0549"/>
<dbReference type="PaxDb" id="511145-b0549"/>
<dbReference type="DNASU" id="945147"/>
<dbReference type="EnsemblBacteria" id="AAC73650">
    <property type="protein sequence ID" value="AAC73650"/>
    <property type="gene ID" value="b0549"/>
</dbReference>
<dbReference type="GeneID" id="945147"/>
<dbReference type="KEGG" id="ecj:JW0537"/>
<dbReference type="KEGG" id="eco:b0549"/>
<dbReference type="KEGG" id="ecoc:C3026_02705"/>
<dbReference type="PATRIC" id="fig|511145.12.peg.570"/>
<dbReference type="EchoBASE" id="EB3396"/>
<dbReference type="eggNOG" id="ENOG5032TP3">
    <property type="taxonomic scope" value="Bacteria"/>
</dbReference>
<dbReference type="HOGENOM" id="CLU_155134_1_0_6"/>
<dbReference type="InParanoid" id="P68661"/>
<dbReference type="OMA" id="PGICNGD"/>
<dbReference type="OrthoDB" id="7068425at2"/>
<dbReference type="PhylomeDB" id="P68661"/>
<dbReference type="BioCyc" id="EcoCyc:G6305-MONOMER"/>
<dbReference type="EvolutionaryTrace" id="P68661"/>
<dbReference type="PRO" id="PR:P68661"/>
<dbReference type="Proteomes" id="UP000000625">
    <property type="component" value="Chromosome"/>
</dbReference>
<dbReference type="GO" id="GO:0046872">
    <property type="term" value="F:metal ion binding"/>
    <property type="evidence" value="ECO:0007669"/>
    <property type="project" value="UniProtKB-KW"/>
</dbReference>
<dbReference type="GO" id="GO:0004518">
    <property type="term" value="F:nuclease activity"/>
    <property type="evidence" value="ECO:0007669"/>
    <property type="project" value="UniProtKB-KW"/>
</dbReference>
<dbReference type="Gene3D" id="3.30.50.20">
    <property type="entry name" value="prophage-derive protein ybcO"/>
    <property type="match status" value="1"/>
</dbReference>
<dbReference type="InterPro" id="IPR010774">
    <property type="entry name" value="YbcO"/>
</dbReference>
<dbReference type="Pfam" id="PF07102">
    <property type="entry name" value="YbcO"/>
    <property type="match status" value="1"/>
</dbReference>
<protein>
    <recommendedName>
        <fullName>Putative nuclease YbcO</fullName>
        <ecNumber>3.1.-.-</ecNumber>
    </recommendedName>
</protein>
<feature type="chain" id="PRO_0000168654" description="Putative nuclease YbcO">
    <location>
        <begin position="1"/>
        <end position="96"/>
    </location>
</feature>
<feature type="active site" description="Proton acceptor" evidence="2">
    <location>
        <position position="32"/>
    </location>
</feature>
<feature type="binding site" evidence="3">
    <location>
        <position position="13"/>
    </location>
    <ligand>
        <name>Zn(2+)</name>
        <dbReference type="ChEBI" id="CHEBI:29105"/>
    </ligand>
</feature>
<feature type="binding site" evidence="3">
    <location>
        <position position="21"/>
    </location>
    <ligand>
        <name>Zn(2+)</name>
        <dbReference type="ChEBI" id="CHEBI:29105"/>
    </ligand>
</feature>
<feature type="binding site" evidence="3">
    <location>
        <position position="54"/>
    </location>
    <ligand>
        <name>Zn(2+)</name>
        <dbReference type="ChEBI" id="CHEBI:29105"/>
    </ligand>
</feature>
<feature type="binding site" evidence="3">
    <location>
        <position position="57"/>
    </location>
    <ligand>
        <name>Zn(2+)</name>
        <dbReference type="ChEBI" id="CHEBI:29105"/>
    </ligand>
</feature>
<feature type="turn" evidence="4">
    <location>
        <begin position="7"/>
        <end position="10"/>
    </location>
</feature>
<feature type="turn" evidence="4">
    <location>
        <begin position="18"/>
        <end position="20"/>
    </location>
</feature>
<feature type="helix" evidence="4">
    <location>
        <begin position="25"/>
        <end position="27"/>
    </location>
</feature>
<feature type="strand" evidence="4">
    <location>
        <begin position="29"/>
        <end position="32"/>
    </location>
</feature>
<feature type="strand" evidence="4">
    <location>
        <begin position="47"/>
        <end position="53"/>
    </location>
</feature>
<feature type="helix" evidence="4">
    <location>
        <begin position="55"/>
        <end position="61"/>
    </location>
</feature>
<feature type="helix" evidence="4">
    <location>
        <begin position="70"/>
        <end position="90"/>
    </location>
</feature>
<evidence type="ECO:0000305" key="1"/>
<evidence type="ECO:0000305" key="2">
    <source>
    </source>
</evidence>
<evidence type="ECO:0007744" key="3">
    <source>
        <dbReference type="PDB" id="3G27"/>
    </source>
</evidence>
<evidence type="ECO:0007829" key="4">
    <source>
        <dbReference type="PDB" id="3G27"/>
    </source>
</evidence>
<sequence>MADLRKAARGRECQVRIPGVCNGNPETSVLAHIRLTGLCGTGTKPPDLIATIACSACHDEIDRRTHFVDAGYAKECALEGMARTQVIWLKEGVIKA</sequence>
<reference key="1">
    <citation type="journal article" date="1996" name="J. Mol. Biol.">
        <title>Holliday junction resolvases encoded by homologous rusA genes in Escherichia coli K-12 and phage 82.</title>
        <authorList>
            <person name="Mahdi A.A."/>
            <person name="Sharples G.J."/>
            <person name="Mandal T.N."/>
            <person name="Lloyd R.G."/>
        </authorList>
    </citation>
    <scope>NUCLEOTIDE SEQUENCE [GENOMIC DNA]</scope>
    <source>
        <strain>K12 / MG1655 / ATCC 47076</strain>
    </source>
</reference>
<reference key="2">
    <citation type="submission" date="1997-01" db="EMBL/GenBank/DDBJ databases">
        <title>Sequence of minutes 4-25 of Escherichia coli.</title>
        <authorList>
            <person name="Chung E."/>
            <person name="Allen E."/>
            <person name="Araujo R."/>
            <person name="Aparicio A.M."/>
            <person name="Davis K."/>
            <person name="Duncan M."/>
            <person name="Federspiel N."/>
            <person name="Hyman R."/>
            <person name="Kalman S."/>
            <person name="Komp C."/>
            <person name="Kurdi O."/>
            <person name="Lew H."/>
            <person name="Lin D."/>
            <person name="Namath A."/>
            <person name="Oefner P."/>
            <person name="Roberts D."/>
            <person name="Schramm S."/>
            <person name="Davis R.W."/>
        </authorList>
    </citation>
    <scope>NUCLEOTIDE SEQUENCE [LARGE SCALE GENOMIC DNA]</scope>
    <source>
        <strain>K12 / MG1655 / ATCC 47076</strain>
    </source>
</reference>
<reference key="3">
    <citation type="journal article" date="1997" name="Science">
        <title>The complete genome sequence of Escherichia coli K-12.</title>
        <authorList>
            <person name="Blattner F.R."/>
            <person name="Plunkett G. III"/>
            <person name="Bloch C.A."/>
            <person name="Perna N.T."/>
            <person name="Burland V."/>
            <person name="Riley M."/>
            <person name="Collado-Vides J."/>
            <person name="Glasner J.D."/>
            <person name="Rode C.K."/>
            <person name="Mayhew G.F."/>
            <person name="Gregor J."/>
            <person name="Davis N.W."/>
            <person name="Kirkpatrick H.A."/>
            <person name="Goeden M.A."/>
            <person name="Rose D.J."/>
            <person name="Mau B."/>
            <person name="Shao Y."/>
        </authorList>
    </citation>
    <scope>NUCLEOTIDE SEQUENCE [LARGE SCALE GENOMIC DNA]</scope>
    <source>
        <strain>K12 / MG1655 / ATCC 47076</strain>
    </source>
</reference>
<reference key="4">
    <citation type="journal article" date="2006" name="Mol. Syst. Biol.">
        <title>Highly accurate genome sequences of Escherichia coli K-12 strains MG1655 and W3110.</title>
        <authorList>
            <person name="Hayashi K."/>
            <person name="Morooka N."/>
            <person name="Yamamoto Y."/>
            <person name="Fujita K."/>
            <person name="Isono K."/>
            <person name="Choi S."/>
            <person name="Ohtsubo E."/>
            <person name="Baba T."/>
            <person name="Wanner B.L."/>
            <person name="Mori H."/>
            <person name="Horiuchi T."/>
        </authorList>
    </citation>
    <scope>NUCLEOTIDE SEQUENCE [LARGE SCALE GENOMIC DNA]</scope>
    <source>
        <strain>K12 / W3110 / ATCC 27325 / DSM 5911</strain>
    </source>
</reference>
<reference key="5">
    <citation type="journal article" date="2016" name="Sci. Rep.">
        <title>Classification of the treble clef zinc finger: noteworthy lessons for structure and function evolution.</title>
        <authorList>
            <person name="Kaur G."/>
            <person name="Subramanian S."/>
        </authorList>
    </citation>
    <scope>PREDICTION OF FUNCTION</scope>
    <scope>ACTIVE SITE PREDICTION</scope>
</reference>
<reference evidence="3" key="6">
    <citation type="submission" date="2009-01" db="PDB data bank">
        <title>Structure of a putative bacteriophage protein from Escherichia coli str. K-12 substr. MG1655.</title>
        <authorList>
            <person name="Cuff M.E."/>
            <person name="Evdokimova E."/>
            <person name="Kudritska M."/>
            <person name="Edwards A."/>
            <person name="Savchenko A."/>
            <person name="Joachimiak A."/>
        </authorList>
    </citation>
    <scope>X-RAY CRYSTALLOGRAPHY (2.10 ANGSTROMS) IN COMPLEX WITH ZINC</scope>
</reference>
<gene>
    <name type="primary">ybcO</name>
    <name type="ordered locus">b0549</name>
    <name type="ordered locus">JW0537</name>
</gene>
<organism>
    <name type="scientific">Escherichia coli (strain K12)</name>
    <dbReference type="NCBI Taxonomy" id="83333"/>
    <lineage>
        <taxon>Bacteria</taxon>
        <taxon>Pseudomonadati</taxon>
        <taxon>Pseudomonadota</taxon>
        <taxon>Gammaproteobacteria</taxon>
        <taxon>Enterobacterales</taxon>
        <taxon>Enterobacteriaceae</taxon>
        <taxon>Escherichia</taxon>
    </lineage>
</organism>